<keyword id="KW-0028">Amino-acid biosynthesis</keyword>
<keyword id="KW-0963">Cytoplasm</keyword>
<keyword id="KW-0368">Histidine biosynthesis</keyword>
<keyword id="KW-0456">Lyase</keyword>
<keyword id="KW-1185">Reference proteome</keyword>
<sequence length="258" mass="27266">MTLKARIIPCLDVKDGRVVKGVNFVDLIDAGDPVEAAKAYDAAGADELCFLDITASSDNRDTIFDVVSRTADHCFMPVTVGGGVRSVADIRKLLLCGADKVSINSAAVKDPDFVAQAADKFGNQCIVVSIDAKRVSKDGEADRWEIFTHGGRQPTGIDAVEFAIKMVERGAGELLVTSMDRDGTKSGYDIGLTRSIADQVRVPVIASGGVGTLDDLVAGVRDGHATAVLAASIFHFGTYSIGEAKSYMAEHGIAMRLD</sequence>
<feature type="chain" id="PRO_0000142106" description="Imidazole glycerol phosphate synthase subunit HisF">
    <location>
        <begin position="1"/>
        <end position="258"/>
    </location>
</feature>
<feature type="active site" evidence="2">
    <location>
        <position position="12"/>
    </location>
</feature>
<feature type="active site" evidence="2">
    <location>
        <position position="131"/>
    </location>
</feature>
<name>HIS6_AGRFC</name>
<comment type="function">
    <text evidence="1">IGPS catalyzes the conversion of PRFAR and glutamine to IGP, AICAR and glutamate. The HisF subunit catalyzes the cyclization activity that produces IGP and AICAR from PRFAR using the ammonia provided by the HisH subunit (By similarity).</text>
</comment>
<comment type="catalytic activity">
    <reaction>
        <text>5-[(5-phospho-1-deoxy-D-ribulos-1-ylimino)methylamino]-1-(5-phospho-beta-D-ribosyl)imidazole-4-carboxamide + L-glutamine = D-erythro-1-(imidazol-4-yl)glycerol 3-phosphate + 5-amino-1-(5-phospho-beta-D-ribosyl)imidazole-4-carboxamide + L-glutamate + H(+)</text>
        <dbReference type="Rhea" id="RHEA:24793"/>
        <dbReference type="ChEBI" id="CHEBI:15378"/>
        <dbReference type="ChEBI" id="CHEBI:29985"/>
        <dbReference type="ChEBI" id="CHEBI:58278"/>
        <dbReference type="ChEBI" id="CHEBI:58359"/>
        <dbReference type="ChEBI" id="CHEBI:58475"/>
        <dbReference type="ChEBI" id="CHEBI:58525"/>
        <dbReference type="EC" id="4.3.2.10"/>
    </reaction>
</comment>
<comment type="pathway">
    <text>Amino-acid biosynthesis; L-histidine biosynthesis; L-histidine from 5-phospho-alpha-D-ribose 1-diphosphate: step 5/9.</text>
</comment>
<comment type="subunit">
    <text evidence="1">Heterodimer of HisH and HisF.</text>
</comment>
<comment type="subcellular location">
    <subcellularLocation>
        <location evidence="1">Cytoplasm</location>
    </subcellularLocation>
</comment>
<comment type="similarity">
    <text evidence="3">Belongs to the HisA/HisF family.</text>
</comment>
<organism>
    <name type="scientific">Agrobacterium fabrum (strain C58 / ATCC 33970)</name>
    <name type="common">Agrobacterium tumefaciens (strain C58)</name>
    <dbReference type="NCBI Taxonomy" id="176299"/>
    <lineage>
        <taxon>Bacteria</taxon>
        <taxon>Pseudomonadati</taxon>
        <taxon>Pseudomonadota</taxon>
        <taxon>Alphaproteobacteria</taxon>
        <taxon>Hyphomicrobiales</taxon>
        <taxon>Rhizobiaceae</taxon>
        <taxon>Rhizobium/Agrobacterium group</taxon>
        <taxon>Agrobacterium</taxon>
        <taxon>Agrobacterium tumefaciens complex</taxon>
    </lineage>
</organism>
<dbReference type="EC" id="4.3.2.10"/>
<dbReference type="EMBL" id="AE007869">
    <property type="protein sequence ID" value="AAK85863.1"/>
    <property type="molecule type" value="Genomic_DNA"/>
</dbReference>
<dbReference type="PIR" id="AH2581">
    <property type="entry name" value="AH2581"/>
</dbReference>
<dbReference type="PIR" id="F97363">
    <property type="entry name" value="F97363"/>
</dbReference>
<dbReference type="RefSeq" id="NP_353078.1">
    <property type="nucleotide sequence ID" value="NC_003062.2"/>
</dbReference>
<dbReference type="RefSeq" id="WP_010970619.1">
    <property type="nucleotide sequence ID" value="NC_003062.2"/>
</dbReference>
<dbReference type="SMR" id="P58799"/>
<dbReference type="STRING" id="176299.Atu0039"/>
<dbReference type="EnsemblBacteria" id="AAK85863">
    <property type="protein sequence ID" value="AAK85863"/>
    <property type="gene ID" value="Atu0039"/>
</dbReference>
<dbReference type="GeneID" id="1132077"/>
<dbReference type="KEGG" id="atu:Atu0039"/>
<dbReference type="PATRIC" id="fig|176299.10.peg.39"/>
<dbReference type="eggNOG" id="COG0107">
    <property type="taxonomic scope" value="Bacteria"/>
</dbReference>
<dbReference type="HOGENOM" id="CLU_048577_4_0_5"/>
<dbReference type="OrthoDB" id="9781903at2"/>
<dbReference type="PhylomeDB" id="P58799"/>
<dbReference type="BioCyc" id="AGRO:ATU0039-MONOMER"/>
<dbReference type="UniPathway" id="UPA00031">
    <property type="reaction ID" value="UER00010"/>
</dbReference>
<dbReference type="Proteomes" id="UP000000813">
    <property type="component" value="Chromosome circular"/>
</dbReference>
<dbReference type="GO" id="GO:0005737">
    <property type="term" value="C:cytoplasm"/>
    <property type="evidence" value="ECO:0007669"/>
    <property type="project" value="UniProtKB-SubCell"/>
</dbReference>
<dbReference type="GO" id="GO:0000107">
    <property type="term" value="F:imidazoleglycerol-phosphate synthase activity"/>
    <property type="evidence" value="ECO:0007669"/>
    <property type="project" value="UniProtKB-UniRule"/>
</dbReference>
<dbReference type="GO" id="GO:0016829">
    <property type="term" value="F:lyase activity"/>
    <property type="evidence" value="ECO:0007669"/>
    <property type="project" value="UniProtKB-KW"/>
</dbReference>
<dbReference type="GO" id="GO:0000105">
    <property type="term" value="P:L-histidine biosynthetic process"/>
    <property type="evidence" value="ECO:0007669"/>
    <property type="project" value="UniProtKB-UniRule"/>
</dbReference>
<dbReference type="CDD" id="cd04731">
    <property type="entry name" value="HisF"/>
    <property type="match status" value="1"/>
</dbReference>
<dbReference type="FunFam" id="3.20.20.70:FF:000006">
    <property type="entry name" value="Imidazole glycerol phosphate synthase subunit HisF"/>
    <property type="match status" value="1"/>
</dbReference>
<dbReference type="Gene3D" id="3.20.20.70">
    <property type="entry name" value="Aldolase class I"/>
    <property type="match status" value="1"/>
</dbReference>
<dbReference type="HAMAP" id="MF_01013">
    <property type="entry name" value="HisF"/>
    <property type="match status" value="1"/>
</dbReference>
<dbReference type="InterPro" id="IPR013785">
    <property type="entry name" value="Aldolase_TIM"/>
</dbReference>
<dbReference type="InterPro" id="IPR006062">
    <property type="entry name" value="His_biosynth"/>
</dbReference>
<dbReference type="InterPro" id="IPR004651">
    <property type="entry name" value="HisF"/>
</dbReference>
<dbReference type="InterPro" id="IPR050064">
    <property type="entry name" value="IGPS_HisA/HisF"/>
</dbReference>
<dbReference type="InterPro" id="IPR011060">
    <property type="entry name" value="RibuloseP-bd_barrel"/>
</dbReference>
<dbReference type="NCBIfam" id="TIGR00735">
    <property type="entry name" value="hisF"/>
    <property type="match status" value="1"/>
</dbReference>
<dbReference type="PANTHER" id="PTHR21235:SF2">
    <property type="entry name" value="IMIDAZOLE GLYCEROL PHOSPHATE SYNTHASE HISHF"/>
    <property type="match status" value="1"/>
</dbReference>
<dbReference type="PANTHER" id="PTHR21235">
    <property type="entry name" value="IMIDAZOLE GLYCEROL PHOSPHATE SYNTHASE SUBUNIT HISF/H IGP SYNTHASE SUBUNIT HISF/H"/>
    <property type="match status" value="1"/>
</dbReference>
<dbReference type="Pfam" id="PF00977">
    <property type="entry name" value="His_biosynth"/>
    <property type="match status" value="1"/>
</dbReference>
<dbReference type="SUPFAM" id="SSF51366">
    <property type="entry name" value="Ribulose-phoshate binding barrel"/>
    <property type="match status" value="1"/>
</dbReference>
<accession>P58799</accession>
<proteinExistence type="inferred from homology"/>
<protein>
    <recommendedName>
        <fullName>Imidazole glycerol phosphate synthase subunit HisF</fullName>
        <ecNumber>4.3.2.10</ecNumber>
    </recommendedName>
    <alternativeName>
        <fullName>IGP synthase cyclase subunit</fullName>
    </alternativeName>
    <alternativeName>
        <fullName>IGP synthase subunit HisF</fullName>
    </alternativeName>
    <alternativeName>
        <fullName>ImGP synthase subunit HisF</fullName>
        <shortName>IGPS subunit HisF</shortName>
    </alternativeName>
</protein>
<reference key="1">
    <citation type="journal article" date="2001" name="Science">
        <title>The genome of the natural genetic engineer Agrobacterium tumefaciens C58.</title>
        <authorList>
            <person name="Wood D.W."/>
            <person name="Setubal J.C."/>
            <person name="Kaul R."/>
            <person name="Monks D.E."/>
            <person name="Kitajima J.P."/>
            <person name="Okura V.K."/>
            <person name="Zhou Y."/>
            <person name="Chen L."/>
            <person name="Wood G.E."/>
            <person name="Almeida N.F. Jr."/>
            <person name="Woo L."/>
            <person name="Chen Y."/>
            <person name="Paulsen I.T."/>
            <person name="Eisen J.A."/>
            <person name="Karp P.D."/>
            <person name="Bovee D. Sr."/>
            <person name="Chapman P."/>
            <person name="Clendenning J."/>
            <person name="Deatherage G."/>
            <person name="Gillet W."/>
            <person name="Grant C."/>
            <person name="Kutyavin T."/>
            <person name="Levy R."/>
            <person name="Li M.-J."/>
            <person name="McClelland E."/>
            <person name="Palmieri A."/>
            <person name="Raymond C."/>
            <person name="Rouse G."/>
            <person name="Saenphimmachak C."/>
            <person name="Wu Z."/>
            <person name="Romero P."/>
            <person name="Gordon D."/>
            <person name="Zhang S."/>
            <person name="Yoo H."/>
            <person name="Tao Y."/>
            <person name="Biddle P."/>
            <person name="Jung M."/>
            <person name="Krespan W."/>
            <person name="Perry M."/>
            <person name="Gordon-Kamm B."/>
            <person name="Liao L."/>
            <person name="Kim S."/>
            <person name="Hendrick C."/>
            <person name="Zhao Z.-Y."/>
            <person name="Dolan M."/>
            <person name="Chumley F."/>
            <person name="Tingey S.V."/>
            <person name="Tomb J.-F."/>
            <person name="Gordon M.P."/>
            <person name="Olson M.V."/>
            <person name="Nester E.W."/>
        </authorList>
    </citation>
    <scope>NUCLEOTIDE SEQUENCE [LARGE SCALE GENOMIC DNA]</scope>
    <source>
        <strain>C58 / ATCC 33970</strain>
    </source>
</reference>
<reference key="2">
    <citation type="journal article" date="2001" name="Science">
        <title>Genome sequence of the plant pathogen and biotechnology agent Agrobacterium tumefaciens C58.</title>
        <authorList>
            <person name="Goodner B."/>
            <person name="Hinkle G."/>
            <person name="Gattung S."/>
            <person name="Miller N."/>
            <person name="Blanchard M."/>
            <person name="Qurollo B."/>
            <person name="Goldman B.S."/>
            <person name="Cao Y."/>
            <person name="Askenazi M."/>
            <person name="Halling C."/>
            <person name="Mullin L."/>
            <person name="Houmiel K."/>
            <person name="Gordon J."/>
            <person name="Vaudin M."/>
            <person name="Iartchouk O."/>
            <person name="Epp A."/>
            <person name="Liu F."/>
            <person name="Wollam C."/>
            <person name="Allinger M."/>
            <person name="Doughty D."/>
            <person name="Scott C."/>
            <person name="Lappas C."/>
            <person name="Markelz B."/>
            <person name="Flanagan C."/>
            <person name="Crowell C."/>
            <person name="Gurson J."/>
            <person name="Lomo C."/>
            <person name="Sear C."/>
            <person name="Strub G."/>
            <person name="Cielo C."/>
            <person name="Slater S."/>
        </authorList>
    </citation>
    <scope>NUCLEOTIDE SEQUENCE [LARGE SCALE GENOMIC DNA]</scope>
    <source>
        <strain>C58 / ATCC 33970</strain>
    </source>
</reference>
<evidence type="ECO:0000250" key="1"/>
<evidence type="ECO:0000255" key="2"/>
<evidence type="ECO:0000305" key="3"/>
<gene>
    <name type="primary">hisF</name>
    <name type="ordered locus">Atu0039</name>
    <name type="ORF">AGR_C_62</name>
</gene>